<comment type="function">
    <text evidence="2">Proposed to be involved in regulation of apoptosis; the exact mechanism may differ between cell types/tissues. May be involved in hypoxia-induced cell death of transformed cells implicating cytochrome C release and caspase activation (such as CASP9) and inducing mitochondrial permeability transition. May be involved in hypoxia-induced cell death of neuronal cells probably by promoting release of AIFM1 from mitochondria to cytoplasm and its translocation to the nucleus; however, the involvement of caspases has been reported conflictingly.</text>
</comment>
<comment type="subunit">
    <text evidence="1">Interacts with HSP90AB1; HSP90AB1 is essential for FAM162A mitochondrial localization and pro-apoptotic activity. Interacts with VDAC2; the interaction is probably involved in inducing mitochondrial permeability transition.</text>
</comment>
<comment type="subcellular location">
    <subcellularLocation>
        <location evidence="1">Mitochondrion membrane</location>
        <topology evidence="5">Single-pass membrane protein</topology>
    </subcellularLocation>
</comment>
<comment type="similarity">
    <text evidence="5">Belongs to the UPF0389 family.</text>
</comment>
<comment type="caution">
    <text evidence="4 6">A paper showing a role in apoptosis in neurons has been retracted due to panel duplication in several figures.</text>
</comment>
<dbReference type="EMBL" id="BC097971">
    <property type="protein sequence ID" value="AAH97971.1"/>
    <property type="molecule type" value="mRNA"/>
</dbReference>
<dbReference type="RefSeq" id="NP_001386205.1">
    <property type="nucleotide sequence ID" value="NM_001399276.2"/>
</dbReference>
<dbReference type="RefSeq" id="XP_006248475.1">
    <property type="nucleotide sequence ID" value="XM_006248413.3"/>
</dbReference>
<dbReference type="SMR" id="Q4QQV3"/>
<dbReference type="BioGRID" id="262154">
    <property type="interactions" value="1"/>
</dbReference>
<dbReference type="FunCoup" id="Q4QQV3">
    <property type="interactions" value="1851"/>
</dbReference>
<dbReference type="IntAct" id="Q4QQV3">
    <property type="interactions" value="1"/>
</dbReference>
<dbReference type="STRING" id="10116.ENSRNOP00000040367"/>
<dbReference type="GlyGen" id="Q4QQV3">
    <property type="glycosylation" value="1 site, 1 O-linked glycan (1 site)"/>
</dbReference>
<dbReference type="iPTMnet" id="Q4QQV3"/>
<dbReference type="PhosphoSitePlus" id="Q4QQV3"/>
<dbReference type="jPOST" id="Q4QQV3"/>
<dbReference type="PaxDb" id="10116-ENSRNOP00000040367"/>
<dbReference type="GeneID" id="360721"/>
<dbReference type="UCSC" id="RGD:1590883">
    <property type="organism name" value="rat"/>
</dbReference>
<dbReference type="AGR" id="RGD:1590883"/>
<dbReference type="RGD" id="1590883">
    <property type="gene designation" value="Fam162a"/>
</dbReference>
<dbReference type="VEuPathDB" id="HostDB:ENSRNOG00000002255"/>
<dbReference type="eggNOG" id="ENOG502S1PN">
    <property type="taxonomic scope" value="Eukaryota"/>
</dbReference>
<dbReference type="HOGENOM" id="CLU_122911_0_0_1"/>
<dbReference type="InParanoid" id="Q4QQV3"/>
<dbReference type="PRO" id="PR:Q4QQV3"/>
<dbReference type="Proteomes" id="UP000002494">
    <property type="component" value="Chromosome 11"/>
</dbReference>
<dbReference type="Bgee" id="ENSRNOG00000002255">
    <property type="expression patterns" value="Expressed in heart and 20 other cell types or tissues"/>
</dbReference>
<dbReference type="ExpressionAtlas" id="Q4QQV3">
    <property type="expression patterns" value="baseline and differential"/>
</dbReference>
<dbReference type="GO" id="GO:0031966">
    <property type="term" value="C:mitochondrial membrane"/>
    <property type="evidence" value="ECO:0007669"/>
    <property type="project" value="UniProtKB-SubCell"/>
</dbReference>
<dbReference type="GO" id="GO:0005739">
    <property type="term" value="C:mitochondrion"/>
    <property type="evidence" value="ECO:0000318"/>
    <property type="project" value="GO_Central"/>
</dbReference>
<dbReference type="GO" id="GO:0071456">
    <property type="term" value="P:cellular response to hypoxia"/>
    <property type="evidence" value="ECO:0000266"/>
    <property type="project" value="RGD"/>
</dbReference>
<dbReference type="GO" id="GO:0051402">
    <property type="term" value="P:neuron apoptotic process"/>
    <property type="evidence" value="ECO:0000266"/>
    <property type="project" value="RGD"/>
</dbReference>
<dbReference type="GO" id="GO:0043065">
    <property type="term" value="P:positive regulation of apoptotic process"/>
    <property type="evidence" value="ECO:0000266"/>
    <property type="project" value="RGD"/>
</dbReference>
<dbReference type="GO" id="GO:0090200">
    <property type="term" value="P:positive regulation of release of cytochrome c from mitochondria"/>
    <property type="evidence" value="ECO:0000250"/>
    <property type="project" value="UniProtKB"/>
</dbReference>
<dbReference type="InterPro" id="IPR009432">
    <property type="entry name" value="DUF1075"/>
</dbReference>
<dbReference type="PANTHER" id="PTHR13674">
    <property type="entry name" value="GROWTH AND TRANSFORMATION-DEPENDENT PROTEIN"/>
    <property type="match status" value="1"/>
</dbReference>
<dbReference type="PANTHER" id="PTHR13674:SF2">
    <property type="entry name" value="PROTEIN FAM162A"/>
    <property type="match status" value="1"/>
</dbReference>
<dbReference type="Pfam" id="PF06388">
    <property type="entry name" value="DUF1075"/>
    <property type="match status" value="1"/>
</dbReference>
<name>F162A_RAT</name>
<proteinExistence type="evidence at transcript level"/>
<reference key="1">
    <citation type="journal article" date="2004" name="Genome Res.">
        <title>The status, quality, and expansion of the NIH full-length cDNA project: the Mammalian Gene Collection (MGC).</title>
        <authorList>
            <consortium name="The MGC Project Team"/>
        </authorList>
    </citation>
    <scope>NUCLEOTIDE SEQUENCE [LARGE SCALE MRNA]</scope>
    <source>
        <tissue>Placenta</tissue>
    </source>
</reference>
<reference key="2">
    <citation type="journal article" date="2009" name="Stroke">
        <title>Proapoptotic role of human growth and transformation-dependent protein in the developing rat brain after hypoxia-ischemia.</title>
        <authorList>
            <person name="Qu Y."/>
            <person name="Mao M."/>
            <person name="Zhao F."/>
            <person name="Zhang L."/>
            <person name="Mu D."/>
        </authorList>
    </citation>
    <scope>RETRACTED PAPER</scope>
</reference>
<reference key="3">
    <citation type="journal article" date="2020" name="Stroke">
        <authorList>
            <person name="Qu Y."/>
            <person name="Mao M."/>
            <person name="Zhao F."/>
            <person name="Zhang L."/>
            <person name="Mu D."/>
        </authorList>
    </citation>
    <scope>RETRACTION NOTICE OF PUBMED:19520982</scope>
</reference>
<feature type="chain" id="PRO_0000254638" description="Protein FAM162A">
    <location>
        <begin position="1"/>
        <end position="155"/>
    </location>
</feature>
<feature type="transmembrane region" description="Helical" evidence="3">
    <location>
        <begin position="102"/>
        <end position="121"/>
    </location>
</feature>
<feature type="region of interest" description="Required for proapoptotic activity" evidence="2">
    <location>
        <begin position="77"/>
        <end position="103"/>
    </location>
</feature>
<evidence type="ECO:0000250" key="1">
    <source>
        <dbReference type="UniProtKB" id="Q96A26"/>
    </source>
</evidence>
<evidence type="ECO:0000250" key="2">
    <source>
        <dbReference type="UniProtKB" id="Q9D6U8"/>
    </source>
</evidence>
<evidence type="ECO:0000255" key="3"/>
<evidence type="ECO:0000269" key="4">
    <source>
    </source>
</evidence>
<evidence type="ECO:0000305" key="5"/>
<evidence type="ECO:0000305" key="6">
    <source>
    </source>
</evidence>
<organism>
    <name type="scientific">Rattus norvegicus</name>
    <name type="common">Rat</name>
    <dbReference type="NCBI Taxonomy" id="10116"/>
    <lineage>
        <taxon>Eukaryota</taxon>
        <taxon>Metazoa</taxon>
        <taxon>Chordata</taxon>
        <taxon>Craniata</taxon>
        <taxon>Vertebrata</taxon>
        <taxon>Euteleostomi</taxon>
        <taxon>Mammalia</taxon>
        <taxon>Eutheria</taxon>
        <taxon>Euarchontoglires</taxon>
        <taxon>Glires</taxon>
        <taxon>Rodentia</taxon>
        <taxon>Myomorpha</taxon>
        <taxon>Muroidea</taxon>
        <taxon>Muridae</taxon>
        <taxon>Murinae</taxon>
        <taxon>Rattus</taxon>
    </lineage>
</organism>
<accession>Q4QQV3</accession>
<gene>
    <name type="primary">Fam162a</name>
    <name type="synonym">E2ig5</name>
</gene>
<keyword id="KW-0053">Apoptosis</keyword>
<keyword id="KW-0472">Membrane</keyword>
<keyword id="KW-0496">Mitochondrion</keyword>
<keyword id="KW-1185">Reference proteome</keyword>
<keyword id="KW-0812">Transmembrane</keyword>
<keyword id="KW-1133">Transmembrane helix</keyword>
<sequence length="155" mass="17827">MWSLRGLRLAAGHCFRLCERNVSSPLRLTRNTDLKRINGFCTKPQESPKAPTQSYRHRVPLHKPTDFEKKILLWSGRFKKEEEIPETISFEMLDAAKNKIRVKVSYLMIALTVAGCVYMVIEGKKAAKRHESLTSLNLERKARLREEAAMKAKAD</sequence>
<protein>
    <recommendedName>
        <fullName>Protein FAM162A</fullName>
    </recommendedName>
    <alternativeName>
        <fullName>E2-induced gene 5 protein homolog</fullName>
    </alternativeName>
</protein>